<feature type="chain" id="PRO_1000080246" description="Large ribosomal subunit protein bL34">
    <location>
        <begin position="1"/>
        <end position="44"/>
    </location>
</feature>
<feature type="region of interest" description="Disordered" evidence="2">
    <location>
        <begin position="1"/>
        <end position="44"/>
    </location>
</feature>
<feature type="compositionally biased region" description="Basic residues" evidence="2">
    <location>
        <begin position="7"/>
        <end position="19"/>
    </location>
</feature>
<feature type="compositionally biased region" description="Basic residues" evidence="2">
    <location>
        <begin position="31"/>
        <end position="44"/>
    </location>
</feature>
<reference key="1">
    <citation type="submission" date="2007-11" db="EMBL/GenBank/DDBJ databases">
        <title>Complete genome sequence of Clostridium phytofermentans ISDg.</title>
        <authorList>
            <person name="Leschine S.B."/>
            <person name="Warnick T.A."/>
            <person name="Blanchard J.L."/>
            <person name="Schnell D.J."/>
            <person name="Petit E.L."/>
            <person name="LaTouf W.G."/>
            <person name="Copeland A."/>
            <person name="Lucas S."/>
            <person name="Lapidus A."/>
            <person name="Barry K."/>
            <person name="Glavina del Rio T."/>
            <person name="Dalin E."/>
            <person name="Tice H."/>
            <person name="Pitluck S."/>
            <person name="Kiss H."/>
            <person name="Brettin T."/>
            <person name="Bruce D."/>
            <person name="Detter J.C."/>
            <person name="Han C."/>
            <person name="Kuske C."/>
            <person name="Schmutz J."/>
            <person name="Larimer F."/>
            <person name="Land M."/>
            <person name="Hauser L."/>
            <person name="Kyrpides N."/>
            <person name="Kim E.A."/>
            <person name="Richardson P."/>
        </authorList>
    </citation>
    <scope>NUCLEOTIDE SEQUENCE [LARGE SCALE GENOMIC DNA]</scope>
    <source>
        <strain>ATCC 700394 / DSM 18823 / ISDg</strain>
    </source>
</reference>
<evidence type="ECO:0000255" key="1">
    <source>
        <dbReference type="HAMAP-Rule" id="MF_00391"/>
    </source>
</evidence>
<evidence type="ECO:0000256" key="2">
    <source>
        <dbReference type="SAM" id="MobiDB-lite"/>
    </source>
</evidence>
<evidence type="ECO:0000305" key="3"/>
<proteinExistence type="inferred from homology"/>
<sequence length="44" mass="5055">MKMTFQPKKRSRAKVHGFRSRMSTSNGRKVLAARRAKGRHKLSA</sequence>
<gene>
    <name evidence="1" type="primary">rpmH</name>
    <name type="ordered locus">Cphy_3946</name>
</gene>
<organism>
    <name type="scientific">Lachnoclostridium phytofermentans (strain ATCC 700394 / DSM 18823 / ISDg)</name>
    <name type="common">Clostridium phytofermentans</name>
    <dbReference type="NCBI Taxonomy" id="357809"/>
    <lineage>
        <taxon>Bacteria</taxon>
        <taxon>Bacillati</taxon>
        <taxon>Bacillota</taxon>
        <taxon>Clostridia</taxon>
        <taxon>Lachnospirales</taxon>
        <taxon>Lachnospiraceae</taxon>
    </lineage>
</organism>
<comment type="similarity">
    <text evidence="1">Belongs to the bacterial ribosomal protein bL34 family.</text>
</comment>
<protein>
    <recommendedName>
        <fullName evidence="1">Large ribosomal subunit protein bL34</fullName>
    </recommendedName>
    <alternativeName>
        <fullName evidence="3">50S ribosomal protein L34</fullName>
    </alternativeName>
</protein>
<keyword id="KW-1185">Reference proteome</keyword>
<keyword id="KW-0687">Ribonucleoprotein</keyword>
<keyword id="KW-0689">Ribosomal protein</keyword>
<accession>A9KLY4</accession>
<dbReference type="EMBL" id="CP000885">
    <property type="protein sequence ID" value="ABX44293.1"/>
    <property type="molecule type" value="Genomic_DNA"/>
</dbReference>
<dbReference type="RefSeq" id="WP_012201940.1">
    <property type="nucleotide sequence ID" value="NC_010001.1"/>
</dbReference>
<dbReference type="SMR" id="A9KLY4"/>
<dbReference type="STRING" id="357809.Cphy_3946"/>
<dbReference type="KEGG" id="cpy:Cphy_3946"/>
<dbReference type="eggNOG" id="COG0230">
    <property type="taxonomic scope" value="Bacteria"/>
</dbReference>
<dbReference type="HOGENOM" id="CLU_129938_2_0_9"/>
<dbReference type="OrthoDB" id="9804164at2"/>
<dbReference type="Proteomes" id="UP000000370">
    <property type="component" value="Chromosome"/>
</dbReference>
<dbReference type="GO" id="GO:1990904">
    <property type="term" value="C:ribonucleoprotein complex"/>
    <property type="evidence" value="ECO:0007669"/>
    <property type="project" value="UniProtKB-KW"/>
</dbReference>
<dbReference type="GO" id="GO:0005840">
    <property type="term" value="C:ribosome"/>
    <property type="evidence" value="ECO:0007669"/>
    <property type="project" value="UniProtKB-KW"/>
</dbReference>
<dbReference type="GO" id="GO:0003735">
    <property type="term" value="F:structural constituent of ribosome"/>
    <property type="evidence" value="ECO:0007669"/>
    <property type="project" value="InterPro"/>
</dbReference>
<dbReference type="GO" id="GO:0006412">
    <property type="term" value="P:translation"/>
    <property type="evidence" value="ECO:0007669"/>
    <property type="project" value="UniProtKB-UniRule"/>
</dbReference>
<dbReference type="FunFam" id="1.10.287.3980:FF:000001">
    <property type="entry name" value="Mitochondrial ribosomal protein L34"/>
    <property type="match status" value="1"/>
</dbReference>
<dbReference type="Gene3D" id="1.10.287.3980">
    <property type="match status" value="1"/>
</dbReference>
<dbReference type="HAMAP" id="MF_00391">
    <property type="entry name" value="Ribosomal_bL34"/>
    <property type="match status" value="1"/>
</dbReference>
<dbReference type="InterPro" id="IPR000271">
    <property type="entry name" value="Ribosomal_bL34"/>
</dbReference>
<dbReference type="InterPro" id="IPR020939">
    <property type="entry name" value="Ribosomal_bL34_CS"/>
</dbReference>
<dbReference type="NCBIfam" id="TIGR01030">
    <property type="entry name" value="rpmH_bact"/>
    <property type="match status" value="1"/>
</dbReference>
<dbReference type="PANTHER" id="PTHR14503:SF4">
    <property type="entry name" value="LARGE RIBOSOMAL SUBUNIT PROTEIN BL34M"/>
    <property type="match status" value="1"/>
</dbReference>
<dbReference type="PANTHER" id="PTHR14503">
    <property type="entry name" value="MITOCHONDRIAL RIBOSOMAL PROTEIN 34 FAMILY MEMBER"/>
    <property type="match status" value="1"/>
</dbReference>
<dbReference type="Pfam" id="PF00468">
    <property type="entry name" value="Ribosomal_L34"/>
    <property type="match status" value="1"/>
</dbReference>
<dbReference type="PROSITE" id="PS00784">
    <property type="entry name" value="RIBOSOMAL_L34"/>
    <property type="match status" value="1"/>
</dbReference>
<name>RL34_LACP7</name>